<keyword id="KW-0408">Iron</keyword>
<keyword id="KW-0456">Lyase</keyword>
<keyword id="KW-0464">Manganese</keyword>
<comment type="function">
    <text evidence="1">Catalyzes the dehydration of D-mannonate.</text>
</comment>
<comment type="catalytic activity">
    <reaction evidence="1">
        <text>D-mannonate = 2-dehydro-3-deoxy-D-gluconate + H2O</text>
        <dbReference type="Rhea" id="RHEA:20097"/>
        <dbReference type="ChEBI" id="CHEBI:15377"/>
        <dbReference type="ChEBI" id="CHEBI:17767"/>
        <dbReference type="ChEBI" id="CHEBI:57990"/>
        <dbReference type="EC" id="4.2.1.8"/>
    </reaction>
</comment>
<comment type="cofactor">
    <cofactor evidence="1">
        <name>Fe(2+)</name>
        <dbReference type="ChEBI" id="CHEBI:29033"/>
    </cofactor>
    <cofactor evidence="1">
        <name>Mn(2+)</name>
        <dbReference type="ChEBI" id="CHEBI:29035"/>
    </cofactor>
</comment>
<comment type="pathway">
    <text evidence="1">Carbohydrate metabolism; pentose and glucuronate interconversion.</text>
</comment>
<comment type="similarity">
    <text evidence="1">Belongs to the mannonate dehydratase family.</text>
</comment>
<dbReference type="EC" id="4.2.1.8" evidence="1"/>
<dbReference type="EMBL" id="CP001357">
    <property type="protein sequence ID" value="ACN84696.1"/>
    <property type="molecule type" value="Genomic_DNA"/>
</dbReference>
<dbReference type="RefSeq" id="WP_012671728.1">
    <property type="nucleotide sequence ID" value="NC_012225.1"/>
</dbReference>
<dbReference type="SMR" id="C0QWB0"/>
<dbReference type="STRING" id="565034.BHWA1_02240"/>
<dbReference type="KEGG" id="bhy:BHWA1_02240"/>
<dbReference type="eggNOG" id="COG1312">
    <property type="taxonomic scope" value="Bacteria"/>
</dbReference>
<dbReference type="HOGENOM" id="CLU_058621_1_0_12"/>
<dbReference type="UniPathway" id="UPA00246"/>
<dbReference type="Proteomes" id="UP000001803">
    <property type="component" value="Chromosome"/>
</dbReference>
<dbReference type="GO" id="GO:0008198">
    <property type="term" value="F:ferrous iron binding"/>
    <property type="evidence" value="ECO:0007669"/>
    <property type="project" value="TreeGrafter"/>
</dbReference>
<dbReference type="GO" id="GO:0030145">
    <property type="term" value="F:manganese ion binding"/>
    <property type="evidence" value="ECO:0007669"/>
    <property type="project" value="TreeGrafter"/>
</dbReference>
<dbReference type="GO" id="GO:0008927">
    <property type="term" value="F:mannonate dehydratase activity"/>
    <property type="evidence" value="ECO:0007669"/>
    <property type="project" value="UniProtKB-UniRule"/>
</dbReference>
<dbReference type="GO" id="GO:0042840">
    <property type="term" value="P:D-glucuronate catabolic process"/>
    <property type="evidence" value="ECO:0007669"/>
    <property type="project" value="TreeGrafter"/>
</dbReference>
<dbReference type="Gene3D" id="3.20.20.150">
    <property type="entry name" value="Divalent-metal-dependent TIM barrel enzymes"/>
    <property type="match status" value="1"/>
</dbReference>
<dbReference type="HAMAP" id="MF_00106">
    <property type="entry name" value="UxuA"/>
    <property type="match status" value="1"/>
</dbReference>
<dbReference type="InterPro" id="IPR004628">
    <property type="entry name" value="Man_deHydtase"/>
</dbReference>
<dbReference type="InterPro" id="IPR036237">
    <property type="entry name" value="Xyl_isomerase-like_sf"/>
</dbReference>
<dbReference type="NCBIfam" id="NF003027">
    <property type="entry name" value="PRK03906.1"/>
    <property type="match status" value="1"/>
</dbReference>
<dbReference type="NCBIfam" id="TIGR00695">
    <property type="entry name" value="uxuA"/>
    <property type="match status" value="1"/>
</dbReference>
<dbReference type="PANTHER" id="PTHR30387">
    <property type="entry name" value="MANNONATE DEHYDRATASE"/>
    <property type="match status" value="1"/>
</dbReference>
<dbReference type="PANTHER" id="PTHR30387:SF2">
    <property type="entry name" value="MANNONATE DEHYDRATASE"/>
    <property type="match status" value="1"/>
</dbReference>
<dbReference type="Pfam" id="PF03786">
    <property type="entry name" value="UxuA"/>
    <property type="match status" value="1"/>
</dbReference>
<dbReference type="PIRSF" id="PIRSF016049">
    <property type="entry name" value="Man_dehyd"/>
    <property type="match status" value="1"/>
</dbReference>
<dbReference type="SUPFAM" id="SSF51658">
    <property type="entry name" value="Xylose isomerase-like"/>
    <property type="match status" value="1"/>
</dbReference>
<accession>C0QWB0</accession>
<reference key="1">
    <citation type="journal article" date="2009" name="PLoS ONE">
        <title>Genome sequence of the pathogenic intestinal spirochete Brachyspira hyodysenteriae reveals adaptations to its lifestyle in the porcine large intestine.</title>
        <authorList>
            <person name="Bellgard M.I."/>
            <person name="Wanchanthuek P."/>
            <person name="La T."/>
            <person name="Ryan K."/>
            <person name="Moolhuijzen P."/>
            <person name="Albertyn Z."/>
            <person name="Shaban B."/>
            <person name="Motro Y."/>
            <person name="Dunn D.S."/>
            <person name="Schibeci D."/>
            <person name="Hunter A."/>
            <person name="Barrero R."/>
            <person name="Phillips N.D."/>
            <person name="Hampson D.J."/>
        </authorList>
    </citation>
    <scope>NUCLEOTIDE SEQUENCE [LARGE SCALE GENOMIC DNA]</scope>
    <source>
        <strain>ATCC 49526 / WA1</strain>
    </source>
</reference>
<protein>
    <recommendedName>
        <fullName evidence="1">Mannonate dehydratase</fullName>
        <ecNumber evidence="1">4.2.1.8</ecNumber>
    </recommendedName>
    <alternativeName>
        <fullName evidence="1">D-mannonate hydro-lyase</fullName>
    </alternativeName>
</protein>
<sequence>MIMTLRWFGKNFDSVTLKQIRQIPGVKGVITTLYDSKVGDAWKEEDVKNIKKEVEDAGLKIYGIESVNILDDIKIGLPSRDKYIENYIKTLEVLGKEGINLVCYNFMPVFDWTRSDLAKVRPDGSTVLSYDQDIIDKIDPQKMFEQIDSNSNGFVLPGWEPERLSRLKELFEMYKGIDDEKLFENLKYFLTAIMPTCEKYNIKMAIHPDDPAWPVFGLPRIIVNKENILRMVNSVNSPCNGITLCAGSLGSNPKNDIPDIIRSLKGKIFFAHVRNLEHTAPGKFQEAAHLSSDGSMDMFAIMKAFYDIGFEGPFRPDHGRAIWDEVSMPGYGLYDRALGAVYLQGLWEAIEKMGK</sequence>
<proteinExistence type="inferred from homology"/>
<organism>
    <name type="scientific">Brachyspira hyodysenteriae (strain ATCC 49526 / WA1)</name>
    <dbReference type="NCBI Taxonomy" id="565034"/>
    <lineage>
        <taxon>Bacteria</taxon>
        <taxon>Pseudomonadati</taxon>
        <taxon>Spirochaetota</taxon>
        <taxon>Spirochaetia</taxon>
        <taxon>Brachyspirales</taxon>
        <taxon>Brachyspiraceae</taxon>
        <taxon>Brachyspira</taxon>
    </lineage>
</organism>
<feature type="chain" id="PRO_1000197922" description="Mannonate dehydratase">
    <location>
        <begin position="1"/>
        <end position="355"/>
    </location>
</feature>
<gene>
    <name evidence="1" type="primary">uxuA</name>
    <name type="ordered locus">BHWA1_02240</name>
</gene>
<name>UXUA_BRAHW</name>
<evidence type="ECO:0000255" key="1">
    <source>
        <dbReference type="HAMAP-Rule" id="MF_00106"/>
    </source>
</evidence>